<keyword id="KW-0687">Ribonucleoprotein</keyword>
<keyword id="KW-0689">Ribosomal protein</keyword>
<keyword id="KW-0694">RNA-binding</keyword>
<keyword id="KW-0699">rRNA-binding</keyword>
<accession>Q50EJ9</accession>
<dbReference type="EMBL" id="AY780645">
    <property type="protein sequence ID" value="AAX14547.1"/>
    <property type="molecule type" value="Genomic_DNA"/>
</dbReference>
<dbReference type="RefSeq" id="WP_003666833.1">
    <property type="nucleotide sequence ID" value="NZ_WLWC01000012.1"/>
</dbReference>
<dbReference type="SMR" id="Q50EJ9"/>
<dbReference type="GeneID" id="77190805"/>
<dbReference type="OMA" id="RINYLTE"/>
<dbReference type="OrthoDB" id="9799262at2"/>
<dbReference type="GO" id="GO:0022627">
    <property type="term" value="C:cytosolic small ribosomal subunit"/>
    <property type="evidence" value="ECO:0007669"/>
    <property type="project" value="TreeGrafter"/>
</dbReference>
<dbReference type="GO" id="GO:0019843">
    <property type="term" value="F:rRNA binding"/>
    <property type="evidence" value="ECO:0007669"/>
    <property type="project" value="UniProtKB-UniRule"/>
</dbReference>
<dbReference type="GO" id="GO:0003735">
    <property type="term" value="F:structural constituent of ribosome"/>
    <property type="evidence" value="ECO:0007669"/>
    <property type="project" value="InterPro"/>
</dbReference>
<dbReference type="GO" id="GO:0006412">
    <property type="term" value="P:translation"/>
    <property type="evidence" value="ECO:0007669"/>
    <property type="project" value="UniProtKB-UniRule"/>
</dbReference>
<dbReference type="CDD" id="cd00677">
    <property type="entry name" value="S15_NS1_EPRS_RNA-bind"/>
    <property type="match status" value="1"/>
</dbReference>
<dbReference type="FunFam" id="1.10.287.10:FF:000002">
    <property type="entry name" value="30S ribosomal protein S15"/>
    <property type="match status" value="1"/>
</dbReference>
<dbReference type="Gene3D" id="6.10.250.3130">
    <property type="match status" value="1"/>
</dbReference>
<dbReference type="Gene3D" id="1.10.287.10">
    <property type="entry name" value="S15/NS1, RNA-binding"/>
    <property type="match status" value="1"/>
</dbReference>
<dbReference type="HAMAP" id="MF_01343_B">
    <property type="entry name" value="Ribosomal_uS15_B"/>
    <property type="match status" value="1"/>
</dbReference>
<dbReference type="InterPro" id="IPR000589">
    <property type="entry name" value="Ribosomal_uS15"/>
</dbReference>
<dbReference type="InterPro" id="IPR005290">
    <property type="entry name" value="Ribosomal_uS15_bac-type"/>
</dbReference>
<dbReference type="InterPro" id="IPR009068">
    <property type="entry name" value="uS15_NS1_RNA-bd_sf"/>
</dbReference>
<dbReference type="NCBIfam" id="TIGR00952">
    <property type="entry name" value="S15_bact"/>
    <property type="match status" value="1"/>
</dbReference>
<dbReference type="PANTHER" id="PTHR23321">
    <property type="entry name" value="RIBOSOMAL PROTEIN S15, BACTERIAL AND ORGANELLAR"/>
    <property type="match status" value="1"/>
</dbReference>
<dbReference type="PANTHER" id="PTHR23321:SF26">
    <property type="entry name" value="SMALL RIBOSOMAL SUBUNIT PROTEIN US15M"/>
    <property type="match status" value="1"/>
</dbReference>
<dbReference type="Pfam" id="PF00312">
    <property type="entry name" value="Ribosomal_S15"/>
    <property type="match status" value="1"/>
</dbReference>
<dbReference type="SMART" id="SM01387">
    <property type="entry name" value="Ribosomal_S15"/>
    <property type="match status" value="1"/>
</dbReference>
<dbReference type="SUPFAM" id="SSF47060">
    <property type="entry name" value="S15/NS1 RNA-binding domain"/>
    <property type="match status" value="1"/>
</dbReference>
<dbReference type="PROSITE" id="PS00362">
    <property type="entry name" value="RIBOSOMAL_S15"/>
    <property type="match status" value="1"/>
</dbReference>
<evidence type="ECO:0000255" key="1">
    <source>
        <dbReference type="HAMAP-Rule" id="MF_01343"/>
    </source>
</evidence>
<evidence type="ECO:0000305" key="2"/>
<name>RS15_LIMRT</name>
<proteinExistence type="inferred from homology"/>
<sequence length="89" mass="10416">MAISKERKDQIIKEFATHEGDTGSTQVQVAVLTADINELNDHLRTHKHDYHSQRGLMKKIGHRRNLLAYLRRTDLPAYRELIQKLGLRR</sequence>
<protein>
    <recommendedName>
        <fullName evidence="1">Small ribosomal subunit protein uS15</fullName>
    </recommendedName>
    <alternativeName>
        <fullName evidence="2">30S ribosomal protein S15</fullName>
    </alternativeName>
</protein>
<reference key="1">
    <citation type="submission" date="2004-10" db="EMBL/GenBank/DDBJ databases">
        <authorList>
            <person name="Vera J.L."/>
            <person name="Santos F."/>
            <person name="Sesma F.J.M."/>
            <person name="Font de Valdez G."/>
            <person name="Hugenholtz J."/>
        </authorList>
    </citation>
    <scope>NUCLEOTIDE SEQUENCE [GENOMIC DNA]</scope>
    <source>
        <strain>CRL 1098</strain>
    </source>
</reference>
<comment type="function">
    <text evidence="1">One of the primary rRNA binding proteins, it binds directly to 16S rRNA where it helps nucleate assembly of the platform of the 30S subunit by binding and bridging several RNA helices of the 16S rRNA.</text>
</comment>
<comment type="function">
    <text evidence="1">Forms an intersubunit bridge (bridge B4) with the 23S rRNA of the 50S subunit in the ribosome.</text>
</comment>
<comment type="subunit">
    <text evidence="1">Part of the 30S ribosomal subunit. Forms a bridge to the 50S subunit in the 70S ribosome, contacting the 23S rRNA.</text>
</comment>
<comment type="similarity">
    <text evidence="1">Belongs to the universal ribosomal protein uS15 family.</text>
</comment>
<feature type="chain" id="PRO_0000115455" description="Small ribosomal subunit protein uS15">
    <location>
        <begin position="1"/>
        <end position="89"/>
    </location>
</feature>
<gene>
    <name evidence="1" type="primary">rpsO</name>
</gene>
<organism>
    <name type="scientific">Limosilactobacillus reuteri</name>
    <name type="common">Lactobacillus reuteri</name>
    <dbReference type="NCBI Taxonomy" id="1598"/>
    <lineage>
        <taxon>Bacteria</taxon>
        <taxon>Bacillati</taxon>
        <taxon>Bacillota</taxon>
        <taxon>Bacilli</taxon>
        <taxon>Lactobacillales</taxon>
        <taxon>Lactobacillaceae</taxon>
        <taxon>Limosilactobacillus</taxon>
    </lineage>
</organism>